<gene>
    <name type="primary">HBE1</name>
</gene>
<feature type="chain" id="PRO_0000053189" description="Hemoglobin subunit epsilon">
    <location>
        <begin position="1"/>
        <end position="147"/>
    </location>
</feature>
<feature type="domain" description="Globin" evidence="2">
    <location>
        <begin position="3"/>
        <end position="147"/>
    </location>
</feature>
<feature type="binding site" description="distal binding residue" evidence="2">
    <location>
        <position position="64"/>
    </location>
    <ligand>
        <name>heme b</name>
        <dbReference type="ChEBI" id="CHEBI:60344"/>
    </ligand>
    <ligandPart>
        <name>Fe</name>
        <dbReference type="ChEBI" id="CHEBI:18248"/>
    </ligandPart>
</feature>
<feature type="binding site" description="proximal binding residue" evidence="2">
    <location>
        <position position="93"/>
    </location>
    <ligand>
        <name>heme b</name>
        <dbReference type="ChEBI" id="CHEBI:60344"/>
    </ligand>
    <ligandPart>
        <name>Fe</name>
        <dbReference type="ChEBI" id="CHEBI:18248"/>
    </ligandPart>
</feature>
<feature type="modified residue" description="Phosphoserine" evidence="1">
    <location>
        <position position="14"/>
    </location>
</feature>
<feature type="modified residue" description="Phosphoserine" evidence="1">
    <location>
        <position position="51"/>
    </location>
</feature>
<name>HBE_BRAAR</name>
<dbReference type="EMBL" id="L25366">
    <property type="protein sequence ID" value="AAA35396.1"/>
    <property type="molecule type" value="Genomic_DNA"/>
</dbReference>
<dbReference type="SMR" id="P68020"/>
<dbReference type="GO" id="GO:0072562">
    <property type="term" value="C:blood microparticle"/>
    <property type="evidence" value="ECO:0007669"/>
    <property type="project" value="TreeGrafter"/>
</dbReference>
<dbReference type="GO" id="GO:0031838">
    <property type="term" value="C:haptoglobin-hemoglobin complex"/>
    <property type="evidence" value="ECO:0007669"/>
    <property type="project" value="TreeGrafter"/>
</dbReference>
<dbReference type="GO" id="GO:0005833">
    <property type="term" value="C:hemoglobin complex"/>
    <property type="evidence" value="ECO:0007669"/>
    <property type="project" value="InterPro"/>
</dbReference>
<dbReference type="GO" id="GO:0031720">
    <property type="term" value="F:haptoglobin binding"/>
    <property type="evidence" value="ECO:0007669"/>
    <property type="project" value="TreeGrafter"/>
</dbReference>
<dbReference type="GO" id="GO:0020037">
    <property type="term" value="F:heme binding"/>
    <property type="evidence" value="ECO:0007669"/>
    <property type="project" value="InterPro"/>
</dbReference>
<dbReference type="GO" id="GO:0031721">
    <property type="term" value="F:hemoglobin alpha binding"/>
    <property type="evidence" value="ECO:0007669"/>
    <property type="project" value="TreeGrafter"/>
</dbReference>
<dbReference type="GO" id="GO:0046872">
    <property type="term" value="F:metal ion binding"/>
    <property type="evidence" value="ECO:0007669"/>
    <property type="project" value="UniProtKB-KW"/>
</dbReference>
<dbReference type="GO" id="GO:0043177">
    <property type="term" value="F:organic acid binding"/>
    <property type="evidence" value="ECO:0007669"/>
    <property type="project" value="TreeGrafter"/>
</dbReference>
<dbReference type="GO" id="GO:0019825">
    <property type="term" value="F:oxygen binding"/>
    <property type="evidence" value="ECO:0007669"/>
    <property type="project" value="InterPro"/>
</dbReference>
<dbReference type="GO" id="GO:0005344">
    <property type="term" value="F:oxygen carrier activity"/>
    <property type="evidence" value="ECO:0007669"/>
    <property type="project" value="UniProtKB-KW"/>
</dbReference>
<dbReference type="GO" id="GO:0004601">
    <property type="term" value="F:peroxidase activity"/>
    <property type="evidence" value="ECO:0007669"/>
    <property type="project" value="TreeGrafter"/>
</dbReference>
<dbReference type="GO" id="GO:0042744">
    <property type="term" value="P:hydrogen peroxide catabolic process"/>
    <property type="evidence" value="ECO:0007669"/>
    <property type="project" value="TreeGrafter"/>
</dbReference>
<dbReference type="CDD" id="cd08925">
    <property type="entry name" value="Hb-beta-like"/>
    <property type="match status" value="1"/>
</dbReference>
<dbReference type="FunFam" id="1.10.490.10:FF:000001">
    <property type="entry name" value="Hemoglobin subunit beta"/>
    <property type="match status" value="1"/>
</dbReference>
<dbReference type="Gene3D" id="1.10.490.10">
    <property type="entry name" value="Globins"/>
    <property type="match status" value="1"/>
</dbReference>
<dbReference type="InterPro" id="IPR000971">
    <property type="entry name" value="Globin"/>
</dbReference>
<dbReference type="InterPro" id="IPR009050">
    <property type="entry name" value="Globin-like_sf"/>
</dbReference>
<dbReference type="InterPro" id="IPR012292">
    <property type="entry name" value="Globin/Proto"/>
</dbReference>
<dbReference type="InterPro" id="IPR002337">
    <property type="entry name" value="Hemoglobin_b"/>
</dbReference>
<dbReference type="InterPro" id="IPR050056">
    <property type="entry name" value="Hemoglobin_oxygen_transport"/>
</dbReference>
<dbReference type="PANTHER" id="PTHR11442">
    <property type="entry name" value="HEMOGLOBIN FAMILY MEMBER"/>
    <property type="match status" value="1"/>
</dbReference>
<dbReference type="PANTHER" id="PTHR11442:SF7">
    <property type="entry name" value="HEMOGLOBIN SUBUNIT EPSILON"/>
    <property type="match status" value="1"/>
</dbReference>
<dbReference type="Pfam" id="PF00042">
    <property type="entry name" value="Globin"/>
    <property type="match status" value="1"/>
</dbReference>
<dbReference type="PRINTS" id="PR00814">
    <property type="entry name" value="BETAHAEM"/>
</dbReference>
<dbReference type="SUPFAM" id="SSF46458">
    <property type="entry name" value="Globin-like"/>
    <property type="match status" value="1"/>
</dbReference>
<dbReference type="PROSITE" id="PS01033">
    <property type="entry name" value="GLOBIN"/>
    <property type="match status" value="1"/>
</dbReference>
<accession>P68020</accession>
<accession>P43350</accession>
<protein>
    <recommendedName>
        <fullName>Hemoglobin subunit epsilon</fullName>
    </recommendedName>
    <alternativeName>
        <fullName>Epsilon-globin</fullName>
    </alternativeName>
    <alternativeName>
        <fullName>Hemoglobin epsilon chain</fullName>
    </alternativeName>
</protein>
<evidence type="ECO:0000250" key="1">
    <source>
        <dbReference type="UniProtKB" id="P02100"/>
    </source>
</evidence>
<evidence type="ECO:0000255" key="2">
    <source>
        <dbReference type="PROSITE-ProRule" id="PRU00238"/>
    </source>
</evidence>
<keyword id="KW-0349">Heme</keyword>
<keyword id="KW-0408">Iron</keyword>
<keyword id="KW-0479">Metal-binding</keyword>
<keyword id="KW-0561">Oxygen transport</keyword>
<keyword id="KW-0597">Phosphoprotein</keyword>
<keyword id="KW-0813">Transport</keyword>
<reference key="1">
    <citation type="journal article" date="1993" name="Mol. Phylogenet. Evol.">
        <title>Molecular phylogeny of the New World monkeys (Platyrrhini, primates).</title>
        <authorList>
            <person name="Schneider H."/>
            <person name="Schneider M.P.C."/>
            <person name="Sampaio I."/>
            <person name="Harada M.L."/>
            <person name="Stanhope M.J."/>
            <person name="Czekysbuaj J."/>
            <person name="Goodman M."/>
        </authorList>
    </citation>
    <scope>NUCLEOTIDE SEQUENCE [GENOMIC DNA]</scope>
    <source>
        <tissue>Lymphocyte</tissue>
    </source>
</reference>
<comment type="function">
    <text>The epsilon chain is a beta-type chain of early mammalian embryonic hemoglobin.</text>
</comment>
<comment type="subunit">
    <text>Heterotetramer of two alpha chains and two epsilon chains in early embryonic hemoglobin Gower-2; two zeta chains and two epsilon chains in early embryonic hemoglobin Gower-1.</text>
</comment>
<comment type="tissue specificity">
    <text>Red blood cells.</text>
</comment>
<comment type="similarity">
    <text evidence="2">Belongs to the globin family.</text>
</comment>
<proteinExistence type="evidence at transcript level"/>
<sequence length="147" mass="16262">MVHFTAEEKAAITSLWGKMNVEEAGGEALGRLLVVYPWTQRFFDNFGNLSSPSAILGNPKVKAHGKKVLTSFGDAIKNMDNLKTTFAKLSELHCDKLHVDPENFRLLGNVMVIILATHFGKEFTPEVQAAWQKLVSAVAIALGHKYH</sequence>
<organism>
    <name type="scientific">Brachyteles arachnoides</name>
    <name type="common">Southern muriqui</name>
    <name type="synonym">Woolly spider monkey</name>
    <dbReference type="NCBI Taxonomy" id="30594"/>
    <lineage>
        <taxon>Eukaryota</taxon>
        <taxon>Metazoa</taxon>
        <taxon>Chordata</taxon>
        <taxon>Craniata</taxon>
        <taxon>Vertebrata</taxon>
        <taxon>Euteleostomi</taxon>
        <taxon>Mammalia</taxon>
        <taxon>Eutheria</taxon>
        <taxon>Euarchontoglires</taxon>
        <taxon>Primates</taxon>
        <taxon>Haplorrhini</taxon>
        <taxon>Platyrrhini</taxon>
        <taxon>Atelidae</taxon>
        <taxon>Atelinae</taxon>
        <taxon>Brachyteles</taxon>
    </lineage>
</organism>